<dbReference type="EC" id="2.7.4.25" evidence="1"/>
<dbReference type="EMBL" id="CP001175">
    <property type="protein sequence ID" value="ACK38973.1"/>
    <property type="molecule type" value="Genomic_DNA"/>
</dbReference>
<dbReference type="RefSeq" id="WP_012581057.1">
    <property type="nucleotide sequence ID" value="NC_011660.1"/>
</dbReference>
<dbReference type="SMR" id="B8DBY7"/>
<dbReference type="KEGG" id="lmh:LMHCC_0617"/>
<dbReference type="HOGENOM" id="CLU_079959_0_2_9"/>
<dbReference type="GO" id="GO:0005829">
    <property type="term" value="C:cytosol"/>
    <property type="evidence" value="ECO:0007669"/>
    <property type="project" value="TreeGrafter"/>
</dbReference>
<dbReference type="GO" id="GO:0005524">
    <property type="term" value="F:ATP binding"/>
    <property type="evidence" value="ECO:0007669"/>
    <property type="project" value="UniProtKB-UniRule"/>
</dbReference>
<dbReference type="GO" id="GO:0036430">
    <property type="term" value="F:CMP kinase activity"/>
    <property type="evidence" value="ECO:0007669"/>
    <property type="project" value="RHEA"/>
</dbReference>
<dbReference type="GO" id="GO:0036431">
    <property type="term" value="F:dCMP kinase activity"/>
    <property type="evidence" value="ECO:0007669"/>
    <property type="project" value="RHEA"/>
</dbReference>
<dbReference type="GO" id="GO:0015949">
    <property type="term" value="P:nucleobase-containing small molecule interconversion"/>
    <property type="evidence" value="ECO:0007669"/>
    <property type="project" value="TreeGrafter"/>
</dbReference>
<dbReference type="GO" id="GO:0006220">
    <property type="term" value="P:pyrimidine nucleotide metabolic process"/>
    <property type="evidence" value="ECO:0007669"/>
    <property type="project" value="UniProtKB-UniRule"/>
</dbReference>
<dbReference type="CDD" id="cd02020">
    <property type="entry name" value="CMPK"/>
    <property type="match status" value="1"/>
</dbReference>
<dbReference type="FunFam" id="3.40.50.300:FF:000484">
    <property type="entry name" value="Cytidylate kinase"/>
    <property type="match status" value="1"/>
</dbReference>
<dbReference type="Gene3D" id="3.40.50.300">
    <property type="entry name" value="P-loop containing nucleotide triphosphate hydrolases"/>
    <property type="match status" value="1"/>
</dbReference>
<dbReference type="HAMAP" id="MF_00238">
    <property type="entry name" value="Cytidyl_kinase_type1"/>
    <property type="match status" value="1"/>
</dbReference>
<dbReference type="InterPro" id="IPR003136">
    <property type="entry name" value="Cytidylate_kin"/>
</dbReference>
<dbReference type="InterPro" id="IPR011994">
    <property type="entry name" value="Cytidylate_kinase_dom"/>
</dbReference>
<dbReference type="InterPro" id="IPR027417">
    <property type="entry name" value="P-loop_NTPase"/>
</dbReference>
<dbReference type="NCBIfam" id="TIGR00017">
    <property type="entry name" value="cmk"/>
    <property type="match status" value="1"/>
</dbReference>
<dbReference type="PANTHER" id="PTHR21299:SF2">
    <property type="entry name" value="CYTIDYLATE KINASE"/>
    <property type="match status" value="1"/>
</dbReference>
<dbReference type="PANTHER" id="PTHR21299">
    <property type="entry name" value="CYTIDYLATE KINASE/PANTOATE-BETA-ALANINE LIGASE"/>
    <property type="match status" value="1"/>
</dbReference>
<dbReference type="Pfam" id="PF02224">
    <property type="entry name" value="Cytidylate_kin"/>
    <property type="match status" value="1"/>
</dbReference>
<dbReference type="SUPFAM" id="SSF52540">
    <property type="entry name" value="P-loop containing nucleoside triphosphate hydrolases"/>
    <property type="match status" value="1"/>
</dbReference>
<protein>
    <recommendedName>
        <fullName evidence="1">Cytidylate kinase</fullName>
        <shortName evidence="1">CK</shortName>
        <ecNumber evidence="1">2.7.4.25</ecNumber>
    </recommendedName>
    <alternativeName>
        <fullName evidence="1">Cytidine monophosphate kinase</fullName>
        <shortName evidence="1">CMP kinase</shortName>
    </alternativeName>
</protein>
<sequence length="224" mass="24830">MTKKICIAIDGPAAAGKSTVAKIVAKKLRFVYIDTGAMYRAVTYIALKNNIAYEDEKGIAALLQKTVIRFEPGEIQQVFVGNENVTEVIRSLEITNHVSIVAAHPSIREALQERQQVFATEGGIVMDGRDIGTAVLPNAELKIFLLASVEERAERRYKENMAKGFAGDLDQLKKEIEERDHLDYTRTHSPLKKADDAIEVDTTSMSIDEVANKILSLAELKINN</sequence>
<proteinExistence type="inferred from homology"/>
<accession>B8DBY7</accession>
<comment type="catalytic activity">
    <reaction evidence="1">
        <text>CMP + ATP = CDP + ADP</text>
        <dbReference type="Rhea" id="RHEA:11600"/>
        <dbReference type="ChEBI" id="CHEBI:30616"/>
        <dbReference type="ChEBI" id="CHEBI:58069"/>
        <dbReference type="ChEBI" id="CHEBI:60377"/>
        <dbReference type="ChEBI" id="CHEBI:456216"/>
        <dbReference type="EC" id="2.7.4.25"/>
    </reaction>
</comment>
<comment type="catalytic activity">
    <reaction evidence="1">
        <text>dCMP + ATP = dCDP + ADP</text>
        <dbReference type="Rhea" id="RHEA:25094"/>
        <dbReference type="ChEBI" id="CHEBI:30616"/>
        <dbReference type="ChEBI" id="CHEBI:57566"/>
        <dbReference type="ChEBI" id="CHEBI:58593"/>
        <dbReference type="ChEBI" id="CHEBI:456216"/>
        <dbReference type="EC" id="2.7.4.25"/>
    </reaction>
</comment>
<comment type="subcellular location">
    <subcellularLocation>
        <location evidence="1">Cytoplasm</location>
    </subcellularLocation>
</comment>
<comment type="similarity">
    <text evidence="1">Belongs to the cytidylate kinase family. Type 1 subfamily.</text>
</comment>
<organism>
    <name type="scientific">Listeria monocytogenes serotype 4a (strain HCC23)</name>
    <dbReference type="NCBI Taxonomy" id="552536"/>
    <lineage>
        <taxon>Bacteria</taxon>
        <taxon>Bacillati</taxon>
        <taxon>Bacillota</taxon>
        <taxon>Bacilli</taxon>
        <taxon>Bacillales</taxon>
        <taxon>Listeriaceae</taxon>
        <taxon>Listeria</taxon>
    </lineage>
</organism>
<gene>
    <name evidence="1" type="primary">cmk</name>
    <name type="ordered locus">LMHCC_0617</name>
</gene>
<keyword id="KW-0067">ATP-binding</keyword>
<keyword id="KW-0963">Cytoplasm</keyword>
<keyword id="KW-0418">Kinase</keyword>
<keyword id="KW-0547">Nucleotide-binding</keyword>
<keyword id="KW-0808">Transferase</keyword>
<name>KCY_LISMH</name>
<reference key="1">
    <citation type="journal article" date="2011" name="J. Bacteriol.">
        <title>Genome sequence of lineage III Listeria monocytogenes strain HCC23.</title>
        <authorList>
            <person name="Steele C.L."/>
            <person name="Donaldson J.R."/>
            <person name="Paul D."/>
            <person name="Banes M.M."/>
            <person name="Arick T."/>
            <person name="Bridges S.M."/>
            <person name="Lawrence M.L."/>
        </authorList>
    </citation>
    <scope>NUCLEOTIDE SEQUENCE [LARGE SCALE GENOMIC DNA]</scope>
    <source>
        <strain>HCC23</strain>
    </source>
</reference>
<evidence type="ECO:0000255" key="1">
    <source>
        <dbReference type="HAMAP-Rule" id="MF_00238"/>
    </source>
</evidence>
<feature type="chain" id="PRO_1000125289" description="Cytidylate kinase">
    <location>
        <begin position="1"/>
        <end position="224"/>
    </location>
</feature>
<feature type="binding site" evidence="1">
    <location>
        <begin position="11"/>
        <end position="19"/>
    </location>
    <ligand>
        <name>ATP</name>
        <dbReference type="ChEBI" id="CHEBI:30616"/>
    </ligand>
</feature>